<reference key="1">
    <citation type="submission" date="2008-03" db="EMBL/GenBank/DDBJ databases">
        <title>Complete sequence of Leptothrix cholodnii SP-6.</title>
        <authorList>
            <consortium name="US DOE Joint Genome Institute"/>
            <person name="Copeland A."/>
            <person name="Lucas S."/>
            <person name="Lapidus A."/>
            <person name="Glavina del Rio T."/>
            <person name="Dalin E."/>
            <person name="Tice H."/>
            <person name="Bruce D."/>
            <person name="Goodwin L."/>
            <person name="Pitluck S."/>
            <person name="Chertkov O."/>
            <person name="Brettin T."/>
            <person name="Detter J.C."/>
            <person name="Han C."/>
            <person name="Kuske C.R."/>
            <person name="Schmutz J."/>
            <person name="Larimer F."/>
            <person name="Land M."/>
            <person name="Hauser L."/>
            <person name="Kyrpides N."/>
            <person name="Lykidis A."/>
            <person name="Emerson D."/>
            <person name="Richardson P."/>
        </authorList>
    </citation>
    <scope>NUCLEOTIDE SEQUENCE [LARGE SCALE GENOMIC DNA]</scope>
    <source>
        <strain>ATCC 51168 / LMG 8142 / SP-6</strain>
    </source>
</reference>
<evidence type="ECO:0000255" key="1">
    <source>
        <dbReference type="HAMAP-Rule" id="MF_00189"/>
    </source>
</evidence>
<accession>B1XZY0</accession>
<organism>
    <name type="scientific">Leptothrix cholodnii (strain ATCC 51168 / LMG 8142 / SP-6)</name>
    <name type="common">Leptothrix discophora (strain SP-6)</name>
    <dbReference type="NCBI Taxonomy" id="395495"/>
    <lineage>
        <taxon>Bacteria</taxon>
        <taxon>Pseudomonadati</taxon>
        <taxon>Pseudomonadota</taxon>
        <taxon>Betaproteobacteria</taxon>
        <taxon>Burkholderiales</taxon>
        <taxon>Sphaerotilaceae</taxon>
        <taxon>Leptothrix</taxon>
    </lineage>
</organism>
<name>YCIB_LEPCP</name>
<sequence length="212" mass="23187">MKLFLDFLPIILFFLTFKVAEGRAEEAAAFATEHLGALVSGGVVGAAEAPVLLATVVVILATLAQVLYLKLRGQKVDTMLWVSLGLVTVMGGATIWFHSETFIKWKPSVLYWVMSAAFLLAPIVAGKDLLRAMLGGQIELPAFAWKKLNLAWAAFFAGMGVLNIWVAYNFSTSTWATFKAFGGMGLMFVFMLAQGLYMHRHMKVDGIKADES</sequence>
<comment type="function">
    <text evidence="1">Plays a role in cell envelope biogenesis, maintenance of cell envelope integrity and membrane homeostasis.</text>
</comment>
<comment type="subcellular location">
    <subcellularLocation>
        <location evidence="1">Cell inner membrane</location>
        <topology evidence="1">Multi-pass membrane protein</topology>
    </subcellularLocation>
</comment>
<comment type="similarity">
    <text evidence="1">Belongs to the YciB family.</text>
</comment>
<dbReference type="EMBL" id="CP001013">
    <property type="protein sequence ID" value="ACB34107.1"/>
    <property type="molecule type" value="Genomic_DNA"/>
</dbReference>
<dbReference type="RefSeq" id="WP_012346868.1">
    <property type="nucleotide sequence ID" value="NC_010524.1"/>
</dbReference>
<dbReference type="STRING" id="395495.Lcho_1840"/>
<dbReference type="KEGG" id="lch:Lcho_1840"/>
<dbReference type="eggNOG" id="COG2917">
    <property type="taxonomic scope" value="Bacteria"/>
</dbReference>
<dbReference type="HOGENOM" id="CLU_089554_2_0_4"/>
<dbReference type="OrthoDB" id="9788219at2"/>
<dbReference type="Proteomes" id="UP000001693">
    <property type="component" value="Chromosome"/>
</dbReference>
<dbReference type="GO" id="GO:0005886">
    <property type="term" value="C:plasma membrane"/>
    <property type="evidence" value="ECO:0007669"/>
    <property type="project" value="UniProtKB-SubCell"/>
</dbReference>
<dbReference type="HAMAP" id="MF_00189">
    <property type="entry name" value="YciB"/>
    <property type="match status" value="1"/>
</dbReference>
<dbReference type="InterPro" id="IPR006008">
    <property type="entry name" value="YciB"/>
</dbReference>
<dbReference type="NCBIfam" id="NF001325">
    <property type="entry name" value="PRK00259.1-3"/>
    <property type="match status" value="1"/>
</dbReference>
<dbReference type="PANTHER" id="PTHR36917:SF1">
    <property type="entry name" value="INNER MEMBRANE-SPANNING PROTEIN YCIB"/>
    <property type="match status" value="1"/>
</dbReference>
<dbReference type="PANTHER" id="PTHR36917">
    <property type="entry name" value="INTRACELLULAR SEPTATION PROTEIN A-RELATED"/>
    <property type="match status" value="1"/>
</dbReference>
<dbReference type="Pfam" id="PF04279">
    <property type="entry name" value="IspA"/>
    <property type="match status" value="1"/>
</dbReference>
<protein>
    <recommendedName>
        <fullName evidence="1">Inner membrane-spanning protein YciB</fullName>
    </recommendedName>
</protein>
<feature type="chain" id="PRO_1000098886" description="Inner membrane-spanning protein YciB">
    <location>
        <begin position="1"/>
        <end position="212"/>
    </location>
</feature>
<feature type="transmembrane region" description="Helical" evidence="1">
    <location>
        <begin position="49"/>
        <end position="69"/>
    </location>
</feature>
<feature type="transmembrane region" description="Helical" evidence="1">
    <location>
        <begin position="78"/>
        <end position="98"/>
    </location>
</feature>
<feature type="transmembrane region" description="Helical" evidence="1">
    <location>
        <begin position="105"/>
        <end position="125"/>
    </location>
</feature>
<feature type="transmembrane region" description="Helical" evidence="1">
    <location>
        <begin position="150"/>
        <end position="170"/>
    </location>
</feature>
<feature type="transmembrane region" description="Helical" evidence="1">
    <location>
        <begin position="178"/>
        <end position="198"/>
    </location>
</feature>
<keyword id="KW-0997">Cell inner membrane</keyword>
<keyword id="KW-1003">Cell membrane</keyword>
<keyword id="KW-0472">Membrane</keyword>
<keyword id="KW-1185">Reference proteome</keyword>
<keyword id="KW-0812">Transmembrane</keyword>
<keyword id="KW-1133">Transmembrane helix</keyword>
<gene>
    <name evidence="1" type="primary">yciB</name>
    <name type="ordered locus">Lcho_1840</name>
</gene>
<proteinExistence type="inferred from homology"/>